<sequence>MTNQTQMMEFLLVRFTENWVLLRLHALLFSLIYLTAVLMNLVIILLMILDHRLHMAMYFFLRHLSFLDLCLISATVPKSILNSVASTDSISFLGCVLQLFLVVLLAGSEIGILTAMSYDRYAAICCPLHCEAVMSRGLCVQLMALSWLNRGALGLLYTAGTFSLNFYGSDELHQFFCDVPALLKLTCSKEHAIISVSVAIGVCYAFSCLVCIVVSYVYIFSAVLRISQRQRQSKAFSNCVPHLIVVTVFLVTGAVAYLKPGSDAPSILDLLVSVFYSVAPPTLNPVIYCLKNKDIKSALSKVLWNVRSSGVMKR</sequence>
<accession>Q8NGZ2</accession>
<accession>A8MPV5</accession>
<accession>Q6IF85</accession>
<accession>Q96R53</accession>
<proteinExistence type="inferred from homology"/>
<organism>
    <name type="scientific">Homo sapiens</name>
    <name type="common">Human</name>
    <dbReference type="NCBI Taxonomy" id="9606"/>
    <lineage>
        <taxon>Eukaryota</taxon>
        <taxon>Metazoa</taxon>
        <taxon>Chordata</taxon>
        <taxon>Craniata</taxon>
        <taxon>Vertebrata</taxon>
        <taxon>Euteleostomi</taxon>
        <taxon>Mammalia</taxon>
        <taxon>Eutheria</taxon>
        <taxon>Euarchontoglires</taxon>
        <taxon>Primates</taxon>
        <taxon>Haplorrhini</taxon>
        <taxon>Catarrhini</taxon>
        <taxon>Hominidae</taxon>
        <taxon>Homo</taxon>
    </lineage>
</organism>
<keyword id="KW-1003">Cell membrane</keyword>
<keyword id="KW-1015">Disulfide bond</keyword>
<keyword id="KW-0297">G-protein coupled receptor</keyword>
<keyword id="KW-0325">Glycoprotein</keyword>
<keyword id="KW-0472">Membrane</keyword>
<keyword id="KW-0552">Olfaction</keyword>
<keyword id="KW-0675">Receptor</keyword>
<keyword id="KW-1185">Reference proteome</keyword>
<keyword id="KW-0716">Sensory transduction</keyword>
<keyword id="KW-0807">Transducer</keyword>
<keyword id="KW-0812">Transmembrane</keyword>
<keyword id="KW-1133">Transmembrane helix</keyword>
<feature type="chain" id="PRO_0000150584" description="Olfactory receptor 14K1">
    <location>
        <begin position="1"/>
        <end position="314"/>
    </location>
</feature>
<feature type="topological domain" description="Extracellular" evidence="1">
    <location>
        <begin position="1"/>
        <end position="23"/>
    </location>
</feature>
<feature type="transmembrane region" description="Helical; Name=1" evidence="1">
    <location>
        <begin position="24"/>
        <end position="44"/>
    </location>
</feature>
<feature type="topological domain" description="Cytoplasmic" evidence="1">
    <location>
        <begin position="45"/>
        <end position="52"/>
    </location>
</feature>
<feature type="transmembrane region" description="Helical; Name=2" evidence="1">
    <location>
        <begin position="53"/>
        <end position="73"/>
    </location>
</feature>
<feature type="topological domain" description="Extracellular" evidence="1">
    <location>
        <begin position="74"/>
        <end position="97"/>
    </location>
</feature>
<feature type="transmembrane region" description="Helical; Name=3" evidence="1">
    <location>
        <begin position="98"/>
        <end position="118"/>
    </location>
</feature>
<feature type="topological domain" description="Cytoplasmic" evidence="1">
    <location>
        <begin position="119"/>
        <end position="131"/>
    </location>
</feature>
<feature type="transmembrane region" description="Helical; Name=4" evidence="1">
    <location>
        <begin position="132"/>
        <end position="152"/>
    </location>
</feature>
<feature type="topological domain" description="Extracellular" evidence="1">
    <location>
        <begin position="153"/>
        <end position="194"/>
    </location>
</feature>
<feature type="transmembrane region" description="Helical; Name=5" evidence="1">
    <location>
        <begin position="195"/>
        <end position="215"/>
    </location>
</feature>
<feature type="topological domain" description="Cytoplasmic" evidence="1">
    <location>
        <begin position="216"/>
        <end position="235"/>
    </location>
</feature>
<feature type="transmembrane region" description="Helical; Name=6" evidence="1">
    <location>
        <begin position="236"/>
        <end position="256"/>
    </location>
</feature>
<feature type="topological domain" description="Extracellular" evidence="1">
    <location>
        <begin position="257"/>
        <end position="269"/>
    </location>
</feature>
<feature type="transmembrane region" description="Helical; Name=7" evidence="1">
    <location>
        <begin position="270"/>
        <end position="290"/>
    </location>
</feature>
<feature type="topological domain" description="Cytoplasmic" evidence="1">
    <location>
        <begin position="291"/>
        <end position="314"/>
    </location>
</feature>
<feature type="glycosylation site" description="N-linked (GlcNAc...) asparagine" evidence="1">
    <location>
        <position position="3"/>
    </location>
</feature>
<feature type="disulfide bond" evidence="2">
    <location>
        <begin position="95"/>
        <end position="187"/>
    </location>
</feature>
<dbReference type="EMBL" id="AB065624">
    <property type="protein sequence ID" value="BAC05850.1"/>
    <property type="status" value="ALT_FRAME"/>
    <property type="molecule type" value="Genomic_DNA"/>
</dbReference>
<dbReference type="EMBL" id="AC118470">
    <property type="status" value="NOT_ANNOTATED_CDS"/>
    <property type="molecule type" value="Genomic_DNA"/>
</dbReference>
<dbReference type="EMBL" id="CH471148">
    <property type="protein sequence ID" value="EAW77201.1"/>
    <property type="molecule type" value="Genomic_DNA"/>
</dbReference>
<dbReference type="EMBL" id="AF399590">
    <property type="protein sequence ID" value="AAK95075.1"/>
    <property type="molecule type" value="Genomic_DNA"/>
</dbReference>
<dbReference type="EMBL" id="BK004377">
    <property type="protein sequence ID" value="DAA04775.1"/>
    <property type="status" value="ALT_FRAME"/>
    <property type="molecule type" value="Genomic_DNA"/>
</dbReference>
<dbReference type="CCDS" id="CCDS86064.1"/>
<dbReference type="RefSeq" id="NP_001004732.2">
    <property type="nucleotide sequence ID" value="NM_001004732.2"/>
</dbReference>
<dbReference type="SMR" id="Q8NGZ2"/>
<dbReference type="STRING" id="9606.ENSP00000283225"/>
<dbReference type="GlyCosmos" id="Q8NGZ2">
    <property type="glycosylation" value="1 site, No reported glycans"/>
</dbReference>
<dbReference type="GlyGen" id="Q8NGZ2">
    <property type="glycosylation" value="1 site"/>
</dbReference>
<dbReference type="iPTMnet" id="Q8NGZ2"/>
<dbReference type="BioMuta" id="OR14K1"/>
<dbReference type="DMDM" id="209572655"/>
<dbReference type="MassIVE" id="Q8NGZ2"/>
<dbReference type="PaxDb" id="9606-ENSP00000283225"/>
<dbReference type="ProteomicsDB" id="73630"/>
<dbReference type="Antibodypedia" id="11915">
    <property type="antibodies" value="8 antibodies from 8 providers"/>
</dbReference>
<dbReference type="Ensembl" id="ENST00000283225.2">
    <property type="protein sequence ID" value="ENSP00000283225.2"/>
    <property type="gene ID" value="ENSG00000153230.4"/>
</dbReference>
<dbReference type="GeneID" id="343170"/>
<dbReference type="MANE-Select" id="ENST00000283225.2">
    <property type="protein sequence ID" value="ENSP00000283225.2"/>
    <property type="RefSeq nucleotide sequence ID" value="NM_001004732.2"/>
    <property type="RefSeq protein sequence ID" value="NP_001004732.2"/>
</dbReference>
<dbReference type="UCSC" id="uc057rav.1">
    <property type="organism name" value="human"/>
</dbReference>
<dbReference type="AGR" id="HGNC:15025"/>
<dbReference type="GeneCards" id="OR14K1"/>
<dbReference type="HGNC" id="HGNC:15025">
    <property type="gene designation" value="OR14K1"/>
</dbReference>
<dbReference type="HPA" id="ENSG00000153230">
    <property type="expression patterns" value="Not detected"/>
</dbReference>
<dbReference type="neXtProt" id="NX_Q8NGZ2"/>
<dbReference type="OpenTargets" id="ENSG00000153230"/>
<dbReference type="PharmGKB" id="PA32478"/>
<dbReference type="VEuPathDB" id="HostDB:ENSG00000153230"/>
<dbReference type="eggNOG" id="ENOG502SHXQ">
    <property type="taxonomic scope" value="Eukaryota"/>
</dbReference>
<dbReference type="GeneTree" id="ENSGT01050000244828"/>
<dbReference type="HOGENOM" id="CLU_012526_0_1_1"/>
<dbReference type="InParanoid" id="Q8NGZ2"/>
<dbReference type="OMA" id="CVQLMAL"/>
<dbReference type="OrthoDB" id="9588050at2759"/>
<dbReference type="PAN-GO" id="Q8NGZ2">
    <property type="GO annotations" value="2 GO annotations based on evolutionary models"/>
</dbReference>
<dbReference type="PhylomeDB" id="Q8NGZ2"/>
<dbReference type="TreeFam" id="TF352740"/>
<dbReference type="PathwayCommons" id="Q8NGZ2"/>
<dbReference type="Reactome" id="R-HSA-9752946">
    <property type="pathway name" value="Expression and translocation of olfactory receptors"/>
</dbReference>
<dbReference type="Pharos" id="Q8NGZ2">
    <property type="development level" value="Tdark"/>
</dbReference>
<dbReference type="PRO" id="PR:Q8NGZ2"/>
<dbReference type="Proteomes" id="UP000005640">
    <property type="component" value="Chromosome 1"/>
</dbReference>
<dbReference type="RNAct" id="Q8NGZ2">
    <property type="molecule type" value="protein"/>
</dbReference>
<dbReference type="Bgee" id="ENSG00000153230">
    <property type="expression patterns" value="Expressed in male germ line stem cell (sensu Vertebrata) in testis and 3 other cell types or tissues"/>
</dbReference>
<dbReference type="GO" id="GO:0005886">
    <property type="term" value="C:plasma membrane"/>
    <property type="evidence" value="ECO:0007669"/>
    <property type="project" value="UniProtKB-SubCell"/>
</dbReference>
<dbReference type="GO" id="GO:0004930">
    <property type="term" value="F:G protein-coupled receptor activity"/>
    <property type="evidence" value="ECO:0007669"/>
    <property type="project" value="UniProtKB-KW"/>
</dbReference>
<dbReference type="GO" id="GO:0005549">
    <property type="term" value="F:odorant binding"/>
    <property type="evidence" value="ECO:0000318"/>
    <property type="project" value="GO_Central"/>
</dbReference>
<dbReference type="GO" id="GO:0004984">
    <property type="term" value="F:olfactory receptor activity"/>
    <property type="evidence" value="ECO:0000318"/>
    <property type="project" value="GO_Central"/>
</dbReference>
<dbReference type="CDD" id="cd15227">
    <property type="entry name" value="7tmA_OR14-like"/>
    <property type="match status" value="1"/>
</dbReference>
<dbReference type="FunFam" id="1.20.1070.10:FF:000037">
    <property type="entry name" value="Olfactory receptor"/>
    <property type="match status" value="1"/>
</dbReference>
<dbReference type="Gene3D" id="1.20.1070.10">
    <property type="entry name" value="Rhodopsin 7-helix transmembrane proteins"/>
    <property type="match status" value="1"/>
</dbReference>
<dbReference type="InterPro" id="IPR000276">
    <property type="entry name" value="GPCR_Rhodpsn"/>
</dbReference>
<dbReference type="InterPro" id="IPR017452">
    <property type="entry name" value="GPCR_Rhodpsn_7TM"/>
</dbReference>
<dbReference type="InterPro" id="IPR000725">
    <property type="entry name" value="Olfact_rcpt"/>
</dbReference>
<dbReference type="InterPro" id="IPR050516">
    <property type="entry name" value="Olfactory_GPCR"/>
</dbReference>
<dbReference type="PANTHER" id="PTHR26452">
    <property type="entry name" value="OLFACTORY RECEPTOR"/>
    <property type="match status" value="1"/>
</dbReference>
<dbReference type="Pfam" id="PF13853">
    <property type="entry name" value="7tm_4"/>
    <property type="match status" value="1"/>
</dbReference>
<dbReference type="PRINTS" id="PR00237">
    <property type="entry name" value="GPCRRHODOPSN"/>
</dbReference>
<dbReference type="PRINTS" id="PR00245">
    <property type="entry name" value="OLFACTORYR"/>
</dbReference>
<dbReference type="SUPFAM" id="SSF81321">
    <property type="entry name" value="Family A G protein-coupled receptor-like"/>
    <property type="match status" value="1"/>
</dbReference>
<dbReference type="PROSITE" id="PS00237">
    <property type="entry name" value="G_PROTEIN_RECEP_F1_1"/>
    <property type="match status" value="1"/>
</dbReference>
<dbReference type="PROSITE" id="PS50262">
    <property type="entry name" value="G_PROTEIN_RECEP_F1_2"/>
    <property type="match status" value="1"/>
</dbReference>
<reference key="1">
    <citation type="submission" date="2001-07" db="EMBL/GenBank/DDBJ databases">
        <title>Genome-wide discovery and analysis of human seven transmembrane helix receptor genes.</title>
        <authorList>
            <person name="Suwa M."/>
            <person name="Sato T."/>
            <person name="Okouchi I."/>
            <person name="Arita M."/>
            <person name="Futami K."/>
            <person name="Matsumoto S."/>
            <person name="Tsutsumi S."/>
            <person name="Aburatani H."/>
            <person name="Asai K."/>
            <person name="Akiyama Y."/>
        </authorList>
    </citation>
    <scope>NUCLEOTIDE SEQUENCE [GENOMIC DNA]</scope>
</reference>
<reference key="2">
    <citation type="journal article" date="2006" name="Nature">
        <title>The DNA sequence and biological annotation of human chromosome 1.</title>
        <authorList>
            <person name="Gregory S.G."/>
            <person name="Barlow K.F."/>
            <person name="McLay K.E."/>
            <person name="Kaul R."/>
            <person name="Swarbreck D."/>
            <person name="Dunham A."/>
            <person name="Scott C.E."/>
            <person name="Howe K.L."/>
            <person name="Woodfine K."/>
            <person name="Spencer C.C.A."/>
            <person name="Jones M.C."/>
            <person name="Gillson C."/>
            <person name="Searle S."/>
            <person name="Zhou Y."/>
            <person name="Kokocinski F."/>
            <person name="McDonald L."/>
            <person name="Evans R."/>
            <person name="Phillips K."/>
            <person name="Atkinson A."/>
            <person name="Cooper R."/>
            <person name="Jones C."/>
            <person name="Hall R.E."/>
            <person name="Andrews T.D."/>
            <person name="Lloyd C."/>
            <person name="Ainscough R."/>
            <person name="Almeida J.P."/>
            <person name="Ambrose K.D."/>
            <person name="Anderson F."/>
            <person name="Andrew R.W."/>
            <person name="Ashwell R.I.S."/>
            <person name="Aubin K."/>
            <person name="Babbage A.K."/>
            <person name="Bagguley C.L."/>
            <person name="Bailey J."/>
            <person name="Beasley H."/>
            <person name="Bethel G."/>
            <person name="Bird C.P."/>
            <person name="Bray-Allen S."/>
            <person name="Brown J.Y."/>
            <person name="Brown A.J."/>
            <person name="Buckley D."/>
            <person name="Burton J."/>
            <person name="Bye J."/>
            <person name="Carder C."/>
            <person name="Chapman J.C."/>
            <person name="Clark S.Y."/>
            <person name="Clarke G."/>
            <person name="Clee C."/>
            <person name="Cobley V."/>
            <person name="Collier R.E."/>
            <person name="Corby N."/>
            <person name="Coville G.J."/>
            <person name="Davies J."/>
            <person name="Deadman R."/>
            <person name="Dunn M."/>
            <person name="Earthrowl M."/>
            <person name="Ellington A.G."/>
            <person name="Errington H."/>
            <person name="Frankish A."/>
            <person name="Frankland J."/>
            <person name="French L."/>
            <person name="Garner P."/>
            <person name="Garnett J."/>
            <person name="Gay L."/>
            <person name="Ghori M.R.J."/>
            <person name="Gibson R."/>
            <person name="Gilby L.M."/>
            <person name="Gillett W."/>
            <person name="Glithero R.J."/>
            <person name="Grafham D.V."/>
            <person name="Griffiths C."/>
            <person name="Griffiths-Jones S."/>
            <person name="Grocock R."/>
            <person name="Hammond S."/>
            <person name="Harrison E.S.I."/>
            <person name="Hart E."/>
            <person name="Haugen E."/>
            <person name="Heath P.D."/>
            <person name="Holmes S."/>
            <person name="Holt K."/>
            <person name="Howden P.J."/>
            <person name="Hunt A.R."/>
            <person name="Hunt S.E."/>
            <person name="Hunter G."/>
            <person name="Isherwood J."/>
            <person name="James R."/>
            <person name="Johnson C."/>
            <person name="Johnson D."/>
            <person name="Joy A."/>
            <person name="Kay M."/>
            <person name="Kershaw J.K."/>
            <person name="Kibukawa M."/>
            <person name="Kimberley A.M."/>
            <person name="King A."/>
            <person name="Knights A.J."/>
            <person name="Lad H."/>
            <person name="Laird G."/>
            <person name="Lawlor S."/>
            <person name="Leongamornlert D.A."/>
            <person name="Lloyd D.M."/>
            <person name="Loveland J."/>
            <person name="Lovell J."/>
            <person name="Lush M.J."/>
            <person name="Lyne R."/>
            <person name="Martin S."/>
            <person name="Mashreghi-Mohammadi M."/>
            <person name="Matthews L."/>
            <person name="Matthews N.S.W."/>
            <person name="McLaren S."/>
            <person name="Milne S."/>
            <person name="Mistry S."/>
            <person name="Moore M.J.F."/>
            <person name="Nickerson T."/>
            <person name="O'Dell C.N."/>
            <person name="Oliver K."/>
            <person name="Palmeiri A."/>
            <person name="Palmer S.A."/>
            <person name="Parker A."/>
            <person name="Patel D."/>
            <person name="Pearce A.V."/>
            <person name="Peck A.I."/>
            <person name="Pelan S."/>
            <person name="Phelps K."/>
            <person name="Phillimore B.J."/>
            <person name="Plumb R."/>
            <person name="Rajan J."/>
            <person name="Raymond C."/>
            <person name="Rouse G."/>
            <person name="Saenphimmachak C."/>
            <person name="Sehra H.K."/>
            <person name="Sheridan E."/>
            <person name="Shownkeen R."/>
            <person name="Sims S."/>
            <person name="Skuce C.D."/>
            <person name="Smith M."/>
            <person name="Steward C."/>
            <person name="Subramanian S."/>
            <person name="Sycamore N."/>
            <person name="Tracey A."/>
            <person name="Tromans A."/>
            <person name="Van Helmond Z."/>
            <person name="Wall M."/>
            <person name="Wallis J.M."/>
            <person name="White S."/>
            <person name="Whitehead S.L."/>
            <person name="Wilkinson J.E."/>
            <person name="Willey D.L."/>
            <person name="Williams H."/>
            <person name="Wilming L."/>
            <person name="Wray P.W."/>
            <person name="Wu Z."/>
            <person name="Coulson A."/>
            <person name="Vaudin M."/>
            <person name="Sulston J.E."/>
            <person name="Durbin R.M."/>
            <person name="Hubbard T."/>
            <person name="Wooster R."/>
            <person name="Dunham I."/>
            <person name="Carter N.P."/>
            <person name="McVean G."/>
            <person name="Ross M.T."/>
            <person name="Harrow J."/>
            <person name="Olson M.V."/>
            <person name="Beck S."/>
            <person name="Rogers J."/>
            <person name="Bentley D.R."/>
        </authorList>
    </citation>
    <scope>NUCLEOTIDE SEQUENCE [LARGE SCALE GENOMIC DNA]</scope>
</reference>
<reference key="3">
    <citation type="submission" date="2005-07" db="EMBL/GenBank/DDBJ databases">
        <authorList>
            <person name="Mural R.J."/>
            <person name="Istrail S."/>
            <person name="Sutton G.G."/>
            <person name="Florea L."/>
            <person name="Halpern A.L."/>
            <person name="Mobarry C.M."/>
            <person name="Lippert R."/>
            <person name="Walenz B."/>
            <person name="Shatkay H."/>
            <person name="Dew I."/>
            <person name="Miller J.R."/>
            <person name="Flanigan M.J."/>
            <person name="Edwards N.J."/>
            <person name="Bolanos R."/>
            <person name="Fasulo D."/>
            <person name="Halldorsson B.V."/>
            <person name="Hannenhalli S."/>
            <person name="Turner R."/>
            <person name="Yooseph S."/>
            <person name="Lu F."/>
            <person name="Nusskern D.R."/>
            <person name="Shue B.C."/>
            <person name="Zheng X.H."/>
            <person name="Zhong F."/>
            <person name="Delcher A.L."/>
            <person name="Huson D.H."/>
            <person name="Kravitz S.A."/>
            <person name="Mouchard L."/>
            <person name="Reinert K."/>
            <person name="Remington K.A."/>
            <person name="Clark A.G."/>
            <person name="Waterman M.S."/>
            <person name="Eichler E.E."/>
            <person name="Adams M.D."/>
            <person name="Hunkapiller M.W."/>
            <person name="Myers E.W."/>
            <person name="Venter J.C."/>
        </authorList>
    </citation>
    <scope>NUCLEOTIDE SEQUENCE [LARGE SCALE GENOMIC DNA]</scope>
</reference>
<reference key="4">
    <citation type="journal article" date="2002" name="Genomics">
        <title>DEFOG: a practical scheme for deciphering families of genes.</title>
        <authorList>
            <person name="Fuchs T."/>
            <person name="Malecova B."/>
            <person name="Linhart C."/>
            <person name="Sharan R."/>
            <person name="Khen M."/>
            <person name="Herwig R."/>
            <person name="Shmulevich D."/>
            <person name="Elkon R."/>
            <person name="Steinfath M."/>
            <person name="O'Brien J.K."/>
            <person name="Radelof U."/>
            <person name="Lehrach H."/>
            <person name="Lancet D."/>
            <person name="Shamir R."/>
        </authorList>
    </citation>
    <scope>NUCLEOTIDE SEQUENCE [GENOMIC DNA] OF 66-282</scope>
</reference>
<reference key="5">
    <citation type="journal article" date="2004" name="Proc. Natl. Acad. Sci. U.S.A.">
        <title>The human olfactory receptor gene family.</title>
        <authorList>
            <person name="Malnic B."/>
            <person name="Godfrey P.A."/>
            <person name="Buck L.B."/>
        </authorList>
    </citation>
    <scope>IDENTIFICATION</scope>
</reference>
<reference key="6">
    <citation type="journal article" date="2004" name="Proc. Natl. Acad. Sci. U.S.A.">
        <authorList>
            <person name="Malnic B."/>
            <person name="Godfrey P.A."/>
            <person name="Buck L.B."/>
        </authorList>
    </citation>
    <scope>ERRATUM OF PUBMED:14983052</scope>
</reference>
<evidence type="ECO:0000255" key="1"/>
<evidence type="ECO:0000255" key="2">
    <source>
        <dbReference type="PROSITE-ProRule" id="PRU00521"/>
    </source>
</evidence>
<evidence type="ECO:0000305" key="3"/>
<gene>
    <name type="primary">OR14K1</name>
    <name type="synonym">OR5AY1</name>
</gene>
<comment type="function">
    <text evidence="3">Odorant receptor.</text>
</comment>
<comment type="subcellular location">
    <subcellularLocation>
        <location>Cell membrane</location>
        <topology>Multi-pass membrane protein</topology>
    </subcellularLocation>
</comment>
<comment type="similarity">
    <text evidence="2">Belongs to the G-protein coupled receptor 1 family.</text>
</comment>
<comment type="sequence caution" evidence="3">
    <conflict type="frameshift">
        <sequence resource="EMBL-CDS" id="BAC05850"/>
    </conflict>
</comment>
<comment type="sequence caution" evidence="3">
    <conflict type="frameshift">
        <sequence resource="EMBL-CDS" id="DAA04775"/>
    </conflict>
</comment>
<comment type="online information" name="Human Olfactory Receptor Data Exploratorium (HORDE)">
    <link uri="http://genome.weizmann.ac.il/horde/card/index/symbol:OR14K1"/>
</comment>
<name>O14K1_HUMAN</name>
<protein>
    <recommendedName>
        <fullName>Olfactory receptor 14K1</fullName>
    </recommendedName>
    <alternativeName>
        <fullName>Olfactory receptor 5AY1</fullName>
    </alternativeName>
    <alternativeName>
        <fullName>Olfactory receptor OR1-39</fullName>
    </alternativeName>
</protein>